<accession>Q5PHY7</accession>
<proteinExistence type="inferred from homology"/>
<protein>
    <recommendedName>
        <fullName evidence="1">NAD-dependent malic enzyme</fullName>
        <shortName evidence="1">NAD-ME</shortName>
        <ecNumber evidence="1">1.1.1.38</ecNumber>
    </recommendedName>
</protein>
<dbReference type="EC" id="1.1.1.38" evidence="1"/>
<dbReference type="EMBL" id="CP000026">
    <property type="protein sequence ID" value="AAV77250.1"/>
    <property type="status" value="ALT_INIT"/>
    <property type="molecule type" value="Genomic_DNA"/>
</dbReference>
<dbReference type="RefSeq" id="WP_000450511.1">
    <property type="nucleotide sequence ID" value="NC_006511.1"/>
</dbReference>
<dbReference type="SMR" id="Q5PHY7"/>
<dbReference type="KEGG" id="spt:SPA1302"/>
<dbReference type="HOGENOM" id="CLU_011405_5_2_6"/>
<dbReference type="Proteomes" id="UP000008185">
    <property type="component" value="Chromosome"/>
</dbReference>
<dbReference type="GO" id="GO:0005829">
    <property type="term" value="C:cytosol"/>
    <property type="evidence" value="ECO:0007669"/>
    <property type="project" value="TreeGrafter"/>
</dbReference>
<dbReference type="GO" id="GO:0004471">
    <property type="term" value="F:malate dehydrogenase (decarboxylating) (NAD+) activity"/>
    <property type="evidence" value="ECO:0007669"/>
    <property type="project" value="UniProtKB-UniRule"/>
</dbReference>
<dbReference type="GO" id="GO:0046872">
    <property type="term" value="F:metal ion binding"/>
    <property type="evidence" value="ECO:0007669"/>
    <property type="project" value="UniProtKB-KW"/>
</dbReference>
<dbReference type="GO" id="GO:0051287">
    <property type="term" value="F:NAD binding"/>
    <property type="evidence" value="ECO:0007669"/>
    <property type="project" value="InterPro"/>
</dbReference>
<dbReference type="GO" id="GO:0008948">
    <property type="term" value="F:oxaloacetate decarboxylase activity"/>
    <property type="evidence" value="ECO:0007669"/>
    <property type="project" value="UniProtKB-UniRule"/>
</dbReference>
<dbReference type="GO" id="GO:0006108">
    <property type="term" value="P:malate metabolic process"/>
    <property type="evidence" value="ECO:0007669"/>
    <property type="project" value="TreeGrafter"/>
</dbReference>
<dbReference type="CDD" id="cd05312">
    <property type="entry name" value="NAD_bind_1_malic_enz"/>
    <property type="match status" value="1"/>
</dbReference>
<dbReference type="FunFam" id="3.40.50.10380:FF:000001">
    <property type="entry name" value="NAD-dependent malic enzyme"/>
    <property type="match status" value="1"/>
</dbReference>
<dbReference type="FunFam" id="3.40.50.720:FF:000055">
    <property type="entry name" value="NAD-dependent malic enzyme"/>
    <property type="match status" value="1"/>
</dbReference>
<dbReference type="Gene3D" id="3.40.50.10380">
    <property type="entry name" value="Malic enzyme, N-terminal domain"/>
    <property type="match status" value="1"/>
</dbReference>
<dbReference type="Gene3D" id="3.40.50.720">
    <property type="entry name" value="NAD(P)-binding Rossmann-like Domain"/>
    <property type="match status" value="1"/>
</dbReference>
<dbReference type="HAMAP" id="MF_01619">
    <property type="entry name" value="NAD_malic_enz"/>
    <property type="match status" value="1"/>
</dbReference>
<dbReference type="InterPro" id="IPR046346">
    <property type="entry name" value="Aminoacid_DH-like_N_sf"/>
</dbReference>
<dbReference type="InterPro" id="IPR015884">
    <property type="entry name" value="Malic_enzyme_CS"/>
</dbReference>
<dbReference type="InterPro" id="IPR012301">
    <property type="entry name" value="Malic_N_dom"/>
</dbReference>
<dbReference type="InterPro" id="IPR037062">
    <property type="entry name" value="Malic_N_dom_sf"/>
</dbReference>
<dbReference type="InterPro" id="IPR012302">
    <property type="entry name" value="Malic_NAD-bd"/>
</dbReference>
<dbReference type="InterPro" id="IPR001891">
    <property type="entry name" value="Malic_OxRdtase"/>
</dbReference>
<dbReference type="InterPro" id="IPR036291">
    <property type="entry name" value="NAD(P)-bd_dom_sf"/>
</dbReference>
<dbReference type="InterPro" id="IPR023667">
    <property type="entry name" value="NAD_malic_enz_proteobac"/>
</dbReference>
<dbReference type="NCBIfam" id="NF010052">
    <property type="entry name" value="PRK13529.1"/>
    <property type="match status" value="1"/>
</dbReference>
<dbReference type="PANTHER" id="PTHR23406">
    <property type="entry name" value="MALIC ENZYME-RELATED"/>
    <property type="match status" value="1"/>
</dbReference>
<dbReference type="PANTHER" id="PTHR23406:SF34">
    <property type="entry name" value="NAD-DEPENDENT MALIC ENZYME, MITOCHONDRIAL"/>
    <property type="match status" value="1"/>
</dbReference>
<dbReference type="Pfam" id="PF00390">
    <property type="entry name" value="malic"/>
    <property type="match status" value="1"/>
</dbReference>
<dbReference type="Pfam" id="PF03949">
    <property type="entry name" value="Malic_M"/>
    <property type="match status" value="1"/>
</dbReference>
<dbReference type="PIRSF" id="PIRSF000106">
    <property type="entry name" value="ME"/>
    <property type="match status" value="1"/>
</dbReference>
<dbReference type="PRINTS" id="PR00072">
    <property type="entry name" value="MALOXRDTASE"/>
</dbReference>
<dbReference type="SMART" id="SM01274">
    <property type="entry name" value="malic"/>
    <property type="match status" value="1"/>
</dbReference>
<dbReference type="SMART" id="SM00919">
    <property type="entry name" value="Malic_M"/>
    <property type="match status" value="1"/>
</dbReference>
<dbReference type="SUPFAM" id="SSF53223">
    <property type="entry name" value="Aminoacid dehydrogenase-like, N-terminal domain"/>
    <property type="match status" value="1"/>
</dbReference>
<dbReference type="SUPFAM" id="SSF51735">
    <property type="entry name" value="NAD(P)-binding Rossmann-fold domains"/>
    <property type="match status" value="1"/>
</dbReference>
<dbReference type="PROSITE" id="PS00331">
    <property type="entry name" value="MALIC_ENZYMES"/>
    <property type="match status" value="1"/>
</dbReference>
<reference key="1">
    <citation type="journal article" date="2004" name="Nat. Genet.">
        <title>Comparison of genome degradation in Paratyphi A and Typhi, human-restricted serovars of Salmonella enterica that cause typhoid.</title>
        <authorList>
            <person name="McClelland M."/>
            <person name="Sanderson K.E."/>
            <person name="Clifton S.W."/>
            <person name="Latreille P."/>
            <person name="Porwollik S."/>
            <person name="Sabo A."/>
            <person name="Meyer R."/>
            <person name="Bieri T."/>
            <person name="Ozersky P."/>
            <person name="McLellan M."/>
            <person name="Harkins C.R."/>
            <person name="Wang C."/>
            <person name="Nguyen C."/>
            <person name="Berghoff A."/>
            <person name="Elliott G."/>
            <person name="Kohlberg S."/>
            <person name="Strong C."/>
            <person name="Du F."/>
            <person name="Carter J."/>
            <person name="Kremizki C."/>
            <person name="Layman D."/>
            <person name="Leonard S."/>
            <person name="Sun H."/>
            <person name="Fulton L."/>
            <person name="Nash W."/>
            <person name="Miner T."/>
            <person name="Minx P."/>
            <person name="Delehaunty K."/>
            <person name="Fronick C."/>
            <person name="Magrini V."/>
            <person name="Nhan M."/>
            <person name="Warren W."/>
            <person name="Florea L."/>
            <person name="Spieth J."/>
            <person name="Wilson R.K."/>
        </authorList>
    </citation>
    <scope>NUCLEOTIDE SEQUENCE [LARGE SCALE GENOMIC DNA]</scope>
    <source>
        <strain>ATCC 9150 / SARB42</strain>
    </source>
</reference>
<gene>
    <name evidence="1" type="primary">maeA</name>
    <name type="ordered locus">SPA1302</name>
</gene>
<organism>
    <name type="scientific">Salmonella paratyphi A (strain ATCC 9150 / SARB42)</name>
    <dbReference type="NCBI Taxonomy" id="295319"/>
    <lineage>
        <taxon>Bacteria</taxon>
        <taxon>Pseudomonadati</taxon>
        <taxon>Pseudomonadota</taxon>
        <taxon>Gammaproteobacteria</taxon>
        <taxon>Enterobacterales</taxon>
        <taxon>Enterobacteriaceae</taxon>
        <taxon>Salmonella</taxon>
    </lineage>
</organism>
<sequence length="565" mass="62896">METTTKKARSLYIPYAGPVLLEFPLLNKGSAFSVEERRNFNLSGLLPEVVESIEEQAERAWLQYQGFKTEIDKHIYLRNIQDTNETLFYRLVQNHLEEMMPVIYTPTVGAACERFSEIYRRARGVFISYPNRHNMDDILQNVPNHNIKVIVVTDGERILGLGDQGIGGMGIPIGKLSLYTACGGISPAYTLPVVLDVGTNNQQLLNDPLYMGWRHPRITDDEYYAFVDEFIQAVKQRWPDILLQFEDFAQKNAMPLLTRYRDEICSFNDDIQGTAAVTVGTLIAASRAAGSQLSEQKIVFLGAGSAGCGIAEQIIAQTQREGLSEDAARQNVFMVDRFGLLTDRMPNLLPFQAKLVQKCDNLQHWDTENDVLSLLDVVRNVKPDILIGVSGQTGLFTEEIIREMHKHCPRPIVMPLSNPTSRVEATPQDIIAWTEGNALVATGSPFSPVIWKDKVYPIAQCNNAYIFPGIGLGVIASGASRITDEMLMSASETLAKHSPLVNNGEGLVLPALKDIQVVSRAIAFAVGKMAQQQGVAVKTSAEALQQAIDDNFWKPEYRDYRRTSI</sequence>
<comment type="catalytic activity">
    <reaction evidence="1">
        <text>(S)-malate + NAD(+) = pyruvate + CO2 + NADH</text>
        <dbReference type="Rhea" id="RHEA:12653"/>
        <dbReference type="ChEBI" id="CHEBI:15361"/>
        <dbReference type="ChEBI" id="CHEBI:15589"/>
        <dbReference type="ChEBI" id="CHEBI:16526"/>
        <dbReference type="ChEBI" id="CHEBI:57540"/>
        <dbReference type="ChEBI" id="CHEBI:57945"/>
        <dbReference type="EC" id="1.1.1.38"/>
    </reaction>
</comment>
<comment type="catalytic activity">
    <reaction evidence="1">
        <text>oxaloacetate + H(+) = pyruvate + CO2</text>
        <dbReference type="Rhea" id="RHEA:15641"/>
        <dbReference type="ChEBI" id="CHEBI:15361"/>
        <dbReference type="ChEBI" id="CHEBI:15378"/>
        <dbReference type="ChEBI" id="CHEBI:16452"/>
        <dbReference type="ChEBI" id="CHEBI:16526"/>
        <dbReference type="EC" id="1.1.1.38"/>
    </reaction>
</comment>
<comment type="cofactor">
    <cofactor evidence="1">
        <name>Mg(2+)</name>
        <dbReference type="ChEBI" id="CHEBI:18420"/>
    </cofactor>
    <cofactor evidence="1">
        <name>Mn(2+)</name>
        <dbReference type="ChEBI" id="CHEBI:29035"/>
    </cofactor>
    <text evidence="1">Divalent metal cations. Prefers magnesium or manganese.</text>
</comment>
<comment type="subunit">
    <text evidence="1">Homotetramer.</text>
</comment>
<comment type="similarity">
    <text evidence="1">Belongs to the malic enzymes family.</text>
</comment>
<comment type="sequence caution" evidence="2">
    <conflict type="erroneous initiation">
        <sequence resource="EMBL-CDS" id="AAV77250"/>
    </conflict>
</comment>
<name>MAO1_SALPA</name>
<keyword id="KW-0479">Metal-binding</keyword>
<keyword id="KW-0520">NAD</keyword>
<keyword id="KW-0560">Oxidoreductase</keyword>
<feature type="chain" id="PRO_0000160229" description="NAD-dependent malic enzyme">
    <location>
        <begin position="1"/>
        <end position="565"/>
    </location>
</feature>
<feature type="active site" description="Proton donor" evidence="1">
    <location>
        <position position="104"/>
    </location>
</feature>
<feature type="active site" description="Proton acceptor" evidence="1">
    <location>
        <position position="175"/>
    </location>
</feature>
<feature type="binding site" evidence="1">
    <location>
        <position position="157"/>
    </location>
    <ligand>
        <name>NAD(+)</name>
        <dbReference type="ChEBI" id="CHEBI:57540"/>
    </ligand>
</feature>
<feature type="binding site" evidence="1">
    <location>
        <position position="246"/>
    </location>
    <ligand>
        <name>a divalent metal cation</name>
        <dbReference type="ChEBI" id="CHEBI:60240"/>
    </ligand>
</feature>
<feature type="binding site" evidence="1">
    <location>
        <position position="247"/>
    </location>
    <ligand>
        <name>a divalent metal cation</name>
        <dbReference type="ChEBI" id="CHEBI:60240"/>
    </ligand>
</feature>
<feature type="binding site" evidence="1">
    <location>
        <position position="270"/>
    </location>
    <ligand>
        <name>a divalent metal cation</name>
        <dbReference type="ChEBI" id="CHEBI:60240"/>
    </ligand>
</feature>
<feature type="binding site" evidence="1">
    <location>
        <position position="270"/>
    </location>
    <ligand>
        <name>NAD(+)</name>
        <dbReference type="ChEBI" id="CHEBI:57540"/>
    </ligand>
</feature>
<feature type="binding site" evidence="1">
    <location>
        <position position="418"/>
    </location>
    <ligand>
        <name>NAD(+)</name>
        <dbReference type="ChEBI" id="CHEBI:57540"/>
    </ligand>
</feature>
<feature type="site" description="Important for activity" evidence="1">
    <location>
        <position position="270"/>
    </location>
</feature>
<evidence type="ECO:0000255" key="1">
    <source>
        <dbReference type="HAMAP-Rule" id="MF_01619"/>
    </source>
</evidence>
<evidence type="ECO:0000305" key="2"/>